<comment type="function">
    <molecule>Polymeric immunoglobulin receptor</molecule>
    <text evidence="1">Mediates selective transcytosis of polymeric IgA and IgM across mucosal epithelial cells. Binds polymeric IgA and IgM at the basolateral surface of epithelial cells. The complex is then transported across the cell to be secreted at the apical surface. During this process, a cleavage occurs that separates the extracellular (known as the secretory component) from the transmembrane segment.</text>
</comment>
<comment type="function">
    <molecule>Secretory component</molecule>
    <text evidence="1">Through its N-linked glycans ensures anchoring of secretory IgA (sIgA) molecules to mucus lining the epithelial surface to neutralize extracellular pathogens. On its own (free form) may act as a non-specific microbial scavenger to prevent pathogen interaction with epithelial cells.</text>
</comment>
<comment type="subunit">
    <text evidence="1">Interacts (mainly via CDR1-like domain) with dimeric IgA. Interacts (mainly via CDR2-like domain) with pentameric IgM.</text>
</comment>
<comment type="subunit">
    <molecule>Secretory component</molecule>
    <text evidence="1">Either free or part of the secretory IgA (sIgA) complex that consists of two, four or five IgA monomers, and two additional non-Ig polypeptides, namely the JCHAIN and the secretory component (the proteolytic product of PIGR). Free secretory component interacts with bacterial antigens toxA of C.difficile and eae of E.coli.</text>
</comment>
<comment type="subcellular location">
    <molecule>Polymeric immunoglobulin receptor</molecule>
    <subcellularLocation>
        <location evidence="1">Cell membrane</location>
        <topology evidence="3">Single-pass type I membrane protein</topology>
    </subcellularLocation>
</comment>
<comment type="subcellular location">
    <molecule>Secretory component</molecule>
    <subcellularLocation>
        <location evidence="1">Secreted</location>
    </subcellularLocation>
</comment>
<comment type="domain">
    <text evidence="1">The Ig-like V-type 1/D1 domain contains three complementarity determining region-like loops CDR1-3, which mediate interaction with IgA and IgM.</text>
</comment>
<comment type="PTM">
    <text evidence="1">N-glycosylated. N-glycosylation is required for anchoring IgA molecules to mucus, but is not necessary for Ig binding.</text>
</comment>
<gene>
    <name type="primary">Pigr</name>
</gene>
<sequence>MRLYLFTLLVTVFSGVSTKSPIFGPQEVSSIEGDSVSITCYYPDTSVNRHTRKYWCRQGASGMCTTLISSNGYLSKEYSGRANLINFPENNTFVINIEQLTQDDTGSYKCGLGTSNRGLSFDVSLEVSQVPELPSDTHVYTKDIGRNVTIECPFKRENAPSKKSLCKKTNQSCELVIDSTEKVNPSYIGRAKLFMKGTDLTVFYVNISHLTHNDAGLYICQAGEGPSADKKNVDLQVLAPEPELLYKDLRSSVTFECDLGREVANEAKYLCRMNKETCDVIINTLGKRDPDFEGRILITPKDDNGRFSVLITGLRKEDAGHYQCGAHSSGLPQEGWPIQTWQLFVNEESTIPNRRSVVKGVTGGSVAIACPYNPKESSSLKYWCRWEGDGNGHCPVLVGTQAQVQEEYEGRLALFDQPGNGTYTVILNQLTTEDAGFYWCLTNGDSRWRTTIELQVAEATREPNLEVTPQNATAVLGETFTVSCHYPCKFYSQEKYWCKWSNKGCHILPSHDEGARQSSVSCDQSSQLVSMTLNPVSKEDEGWYWCGVKQGQTYGETTAIYIAVEERTRGSSHVNPTDANARAKVALEEEVVDSSISEKENKAIPNPGPFANEREIQNVGDQAQENRASGDAGSADGQSRSSSSKVLFSTLVPLGLVLAVGAIAVWVARVRHRKNVDRMSISSYRTDISMADFKNSRDLGGNDNMGASPDTQQTVIEGKDEIVTTTECTAEPEESKKAKRSSKEEADMAYSAFLLQSSTIAAQVHDGPQEA</sequence>
<keyword id="KW-0002">3D-structure</keyword>
<keyword id="KW-1003">Cell membrane</keyword>
<keyword id="KW-1015">Disulfide bond</keyword>
<keyword id="KW-0325">Glycoprotein</keyword>
<keyword id="KW-0393">Immunoglobulin domain</keyword>
<keyword id="KW-0472">Membrane</keyword>
<keyword id="KW-0597">Phosphoprotein</keyword>
<keyword id="KW-1185">Reference proteome</keyword>
<keyword id="KW-0677">Repeat</keyword>
<keyword id="KW-0964">Secreted</keyword>
<keyword id="KW-0732">Signal</keyword>
<keyword id="KW-0812">Transmembrane</keyword>
<keyword id="KW-1133">Transmembrane helix</keyword>
<evidence type="ECO:0000250" key="1">
    <source>
        <dbReference type="UniProtKB" id="P01833"/>
    </source>
</evidence>
<evidence type="ECO:0000250" key="2">
    <source>
        <dbReference type="UniProtKB" id="P15083"/>
    </source>
</evidence>
<evidence type="ECO:0000255" key="3"/>
<evidence type="ECO:0000255" key="4">
    <source>
        <dbReference type="PROSITE-ProRule" id="PRU00114"/>
    </source>
</evidence>
<evidence type="ECO:0000256" key="5">
    <source>
        <dbReference type="SAM" id="MobiDB-lite"/>
    </source>
</evidence>
<evidence type="ECO:0000305" key="6"/>
<evidence type="ECO:0007744" key="7">
    <source>
    </source>
</evidence>
<evidence type="ECO:0007829" key="8">
    <source>
        <dbReference type="PDB" id="4NOB"/>
    </source>
</evidence>
<evidence type="ECO:0007829" key="9">
    <source>
        <dbReference type="PDB" id="4NOF"/>
    </source>
</evidence>
<evidence type="ECO:0007829" key="10">
    <source>
        <dbReference type="PDB" id="7JG2"/>
    </source>
</evidence>
<organism>
    <name type="scientific">Mus musculus</name>
    <name type="common">Mouse</name>
    <dbReference type="NCBI Taxonomy" id="10090"/>
    <lineage>
        <taxon>Eukaryota</taxon>
        <taxon>Metazoa</taxon>
        <taxon>Chordata</taxon>
        <taxon>Craniata</taxon>
        <taxon>Vertebrata</taxon>
        <taxon>Euteleostomi</taxon>
        <taxon>Mammalia</taxon>
        <taxon>Eutheria</taxon>
        <taxon>Euarchontoglires</taxon>
        <taxon>Glires</taxon>
        <taxon>Rodentia</taxon>
        <taxon>Myomorpha</taxon>
        <taxon>Muroidea</taxon>
        <taxon>Muridae</taxon>
        <taxon>Murinae</taxon>
        <taxon>Mus</taxon>
        <taxon>Mus</taxon>
    </lineage>
</organism>
<accession>O70570</accession>
<protein>
    <recommendedName>
        <fullName>Polymeric immunoglobulin receptor</fullName>
        <shortName>PIgR</shortName>
        <shortName>Poly-Ig receptor</shortName>
    </recommendedName>
    <component>
        <recommendedName>
            <fullName>Secretory component</fullName>
        </recommendedName>
    </component>
</protein>
<proteinExistence type="evidence at protein level"/>
<feature type="signal peptide" evidence="3">
    <location>
        <begin position="1"/>
        <end position="18"/>
    </location>
</feature>
<feature type="chain" id="PRO_0000014902" description="Polymeric immunoglobulin receptor">
    <location>
        <begin position="19"/>
        <end position="771"/>
    </location>
</feature>
<feature type="chain" id="PRO_0000014903" description="Secretory component">
    <location>
        <begin position="19"/>
        <end position="611"/>
    </location>
</feature>
<feature type="topological domain" description="Extracellular" evidence="3">
    <location>
        <begin position="19"/>
        <end position="645"/>
    </location>
</feature>
<feature type="transmembrane region" description="Helical" evidence="3">
    <location>
        <begin position="646"/>
        <end position="668"/>
    </location>
</feature>
<feature type="topological domain" description="Cytoplasmic" evidence="3">
    <location>
        <begin position="669"/>
        <end position="771"/>
    </location>
</feature>
<feature type="domain" description="Ig-like V-type 1; required for binding to polymeric IgA and IgM" evidence="1">
    <location>
        <begin position="21"/>
        <end position="120"/>
    </location>
</feature>
<feature type="domain" description="Ig-like V-type 2">
    <location>
        <begin position="135"/>
        <end position="237"/>
    </location>
</feature>
<feature type="domain" description="Ig-like V-type 3">
    <location>
        <begin position="245"/>
        <end position="351"/>
    </location>
</feature>
<feature type="domain" description="Ig-like V-type 4">
    <location>
        <begin position="352"/>
        <end position="457"/>
    </location>
</feature>
<feature type="domain" description="Ig-like V-type 5">
    <location>
        <begin position="463"/>
        <end position="563"/>
    </location>
</feature>
<feature type="region of interest" description="Disordered" evidence="5">
    <location>
        <begin position="622"/>
        <end position="641"/>
    </location>
</feature>
<feature type="compositionally biased region" description="Low complexity" evidence="5">
    <location>
        <begin position="627"/>
        <end position="641"/>
    </location>
</feature>
<feature type="modified residue" description="Phosphoserine" evidence="2">
    <location>
        <position position="680"/>
    </location>
</feature>
<feature type="modified residue" description="Phosphoserine" evidence="7">
    <location>
        <position position="689"/>
    </location>
</feature>
<feature type="modified residue" description="Phosphoserine" evidence="2">
    <location>
        <position position="696"/>
    </location>
</feature>
<feature type="modified residue" description="Phosphoserine" evidence="7">
    <location>
        <position position="742"/>
    </location>
</feature>
<feature type="glycosylation site" description="N-linked (GlcNAc...) asparagine" evidence="3">
    <location>
        <position position="90"/>
    </location>
</feature>
<feature type="glycosylation site" description="N-linked (GlcNAc...) asparagine" evidence="3">
    <location>
        <position position="147"/>
    </location>
</feature>
<feature type="glycosylation site" description="N-linked (GlcNAc...) asparagine" evidence="3">
    <location>
        <position position="170"/>
    </location>
</feature>
<feature type="glycosylation site" description="N-linked (GlcNAc...) asparagine" evidence="3">
    <location>
        <position position="206"/>
    </location>
</feature>
<feature type="glycosylation site" description="N-linked (GlcNAc...) asparagine" evidence="3">
    <location>
        <position position="420"/>
    </location>
</feature>
<feature type="glycosylation site" description="N-linked (GlcNAc...) asparagine" evidence="3">
    <location>
        <position position="471"/>
    </location>
</feature>
<feature type="disulfide bond" evidence="4">
    <location>
        <begin position="40"/>
        <end position="110"/>
    </location>
</feature>
<feature type="disulfide bond" evidence="4">
    <location>
        <begin position="152"/>
        <end position="220"/>
    </location>
</feature>
<feature type="disulfide bond" evidence="4">
    <location>
        <begin position="257"/>
        <end position="324"/>
    </location>
</feature>
<feature type="disulfide bond" evidence="4">
    <location>
        <begin position="370"/>
        <end position="440"/>
    </location>
</feature>
<feature type="disulfide bond" evidence="4">
    <location>
        <begin position="484"/>
        <end position="546"/>
    </location>
</feature>
<feature type="sequence conflict" description="In Ref. 1; AAA67440." evidence="6" ref="1">
    <original>A</original>
    <variation>V</variation>
    <location>
        <position position="159"/>
    </location>
</feature>
<feature type="sequence conflict" description="In Ref. 1; AAA67440." evidence="6" ref="1">
    <original>V</original>
    <variation>A</variation>
    <location>
        <position position="396"/>
    </location>
</feature>
<feature type="sequence conflict" description="In Ref. 1; AAA67440." evidence="6" ref="1">
    <original>G</original>
    <variation>R</variation>
    <location>
        <position position="620"/>
    </location>
</feature>
<feature type="strand" evidence="8">
    <location>
        <begin position="26"/>
        <end position="31"/>
    </location>
</feature>
<feature type="strand" evidence="8">
    <location>
        <begin position="36"/>
        <end position="41"/>
    </location>
</feature>
<feature type="helix" evidence="8">
    <location>
        <begin position="46"/>
        <end position="50"/>
    </location>
</feature>
<feature type="strand" evidence="8">
    <location>
        <begin position="53"/>
        <end position="58"/>
    </location>
</feature>
<feature type="strand" evidence="8">
    <location>
        <begin position="64"/>
        <end position="69"/>
    </location>
</feature>
<feature type="turn" evidence="8">
    <location>
        <begin position="70"/>
        <end position="72"/>
    </location>
</feature>
<feature type="helix" evidence="8">
    <location>
        <begin position="76"/>
        <end position="78"/>
    </location>
</feature>
<feature type="turn" evidence="8">
    <location>
        <begin position="79"/>
        <end position="81"/>
    </location>
</feature>
<feature type="strand" evidence="8">
    <location>
        <begin position="82"/>
        <end position="87"/>
    </location>
</feature>
<feature type="helix" evidence="8">
    <location>
        <begin position="88"/>
        <end position="90"/>
    </location>
</feature>
<feature type="strand" evidence="8">
    <location>
        <begin position="92"/>
        <end position="97"/>
    </location>
</feature>
<feature type="helix" evidence="8">
    <location>
        <begin position="102"/>
        <end position="104"/>
    </location>
</feature>
<feature type="strand" evidence="8">
    <location>
        <begin position="106"/>
        <end position="112"/>
    </location>
</feature>
<feature type="strand" evidence="8">
    <location>
        <begin position="119"/>
        <end position="128"/>
    </location>
</feature>
<feature type="strand" evidence="9">
    <location>
        <begin position="138"/>
        <end position="143"/>
    </location>
</feature>
<feature type="strand" evidence="9">
    <location>
        <begin position="148"/>
        <end position="153"/>
    </location>
</feature>
<feature type="helix" evidence="9">
    <location>
        <begin position="156"/>
        <end position="158"/>
    </location>
</feature>
<feature type="strand" evidence="10">
    <location>
        <begin position="159"/>
        <end position="161"/>
    </location>
</feature>
<feature type="strand" evidence="9">
    <location>
        <begin position="163"/>
        <end position="168"/>
    </location>
</feature>
<feature type="strand" evidence="9">
    <location>
        <begin position="173"/>
        <end position="178"/>
    </location>
</feature>
<feature type="turn" evidence="9">
    <location>
        <begin position="185"/>
        <end position="190"/>
    </location>
</feature>
<feature type="strand" evidence="9">
    <location>
        <begin position="191"/>
        <end position="194"/>
    </location>
</feature>
<feature type="strand" evidence="9">
    <location>
        <begin position="202"/>
        <end position="207"/>
    </location>
</feature>
<feature type="helix" evidence="9">
    <location>
        <begin position="212"/>
        <end position="214"/>
    </location>
</feature>
<feature type="strand" evidence="9">
    <location>
        <begin position="216"/>
        <end position="224"/>
    </location>
</feature>
<feature type="helix" evidence="9">
    <location>
        <begin position="225"/>
        <end position="227"/>
    </location>
</feature>
<feature type="strand" evidence="9">
    <location>
        <begin position="229"/>
        <end position="238"/>
    </location>
</feature>
<feature type="strand" evidence="10">
    <location>
        <begin position="243"/>
        <end position="248"/>
    </location>
</feature>
<feature type="strand" evidence="10">
    <location>
        <begin position="253"/>
        <end position="257"/>
    </location>
</feature>
<feature type="helix" evidence="10">
    <location>
        <begin position="261"/>
        <end position="263"/>
    </location>
</feature>
<feature type="strand" evidence="10">
    <location>
        <begin position="266"/>
        <end position="273"/>
    </location>
</feature>
<feature type="strand" evidence="10">
    <location>
        <begin position="275"/>
        <end position="283"/>
    </location>
</feature>
<feature type="helix" evidence="10">
    <location>
        <begin position="290"/>
        <end position="292"/>
    </location>
</feature>
<feature type="strand" evidence="10">
    <location>
        <begin position="295"/>
        <end position="297"/>
    </location>
</feature>
<feature type="strand" evidence="10">
    <location>
        <begin position="307"/>
        <end position="311"/>
    </location>
</feature>
<feature type="helix" evidence="10">
    <location>
        <begin position="316"/>
        <end position="318"/>
    </location>
</feature>
<feature type="strand" evidence="10">
    <location>
        <begin position="320"/>
        <end position="324"/>
    </location>
</feature>
<feature type="strand" evidence="10">
    <location>
        <begin position="334"/>
        <end position="336"/>
    </location>
</feature>
<feature type="strand" evidence="10">
    <location>
        <begin position="339"/>
        <end position="348"/>
    </location>
</feature>
<feature type="strand" evidence="10">
    <location>
        <begin position="357"/>
        <end position="361"/>
    </location>
</feature>
<feature type="strand" evidence="10">
    <location>
        <begin position="364"/>
        <end position="371"/>
    </location>
</feature>
<feature type="helix" evidence="10">
    <location>
        <begin position="374"/>
        <end position="376"/>
    </location>
</feature>
<feature type="turn" evidence="10">
    <location>
        <begin position="389"/>
        <end position="391"/>
    </location>
</feature>
<feature type="turn" evidence="10">
    <location>
        <begin position="406"/>
        <end position="408"/>
    </location>
</feature>
<feature type="strand" evidence="10">
    <location>
        <begin position="409"/>
        <end position="411"/>
    </location>
</feature>
<feature type="strand" evidence="10">
    <location>
        <begin position="413"/>
        <end position="415"/>
    </location>
</feature>
<feature type="strand" evidence="10">
    <location>
        <begin position="418"/>
        <end position="429"/>
    </location>
</feature>
<feature type="helix" evidence="10">
    <location>
        <begin position="432"/>
        <end position="434"/>
    </location>
</feature>
<feature type="strand" evidence="10">
    <location>
        <begin position="436"/>
        <end position="439"/>
    </location>
</feature>
<feature type="strand" evidence="10">
    <location>
        <begin position="451"/>
        <end position="457"/>
    </location>
</feature>
<feature type="strand" evidence="10">
    <location>
        <begin position="470"/>
        <end position="475"/>
    </location>
</feature>
<feature type="strand" evidence="10">
    <location>
        <begin position="480"/>
        <end position="485"/>
    </location>
</feature>
<feature type="helix" evidence="10">
    <location>
        <begin position="488"/>
        <end position="490"/>
    </location>
</feature>
<feature type="strand" evidence="10">
    <location>
        <begin position="493"/>
        <end position="500"/>
    </location>
</feature>
<feature type="strand" evidence="10">
    <location>
        <begin position="505"/>
        <end position="508"/>
    </location>
</feature>
<feature type="strand" evidence="10">
    <location>
        <begin position="511"/>
        <end position="513"/>
    </location>
</feature>
<feature type="strand" evidence="10">
    <location>
        <begin position="528"/>
        <end position="535"/>
    </location>
</feature>
<feature type="helix" evidence="10">
    <location>
        <begin position="538"/>
        <end position="540"/>
    </location>
</feature>
<feature type="strand" evidence="10">
    <location>
        <begin position="542"/>
        <end position="550"/>
    </location>
</feature>
<feature type="strand" evidence="10">
    <location>
        <begin position="558"/>
        <end position="565"/>
    </location>
</feature>
<reference key="1">
    <citation type="journal article" date="1995" name="J. Immunol.">
        <title>Molecular cloning of the mouse polymeric Ig receptor. Functional regions of the molecule are conserved among five mammalian species.</title>
        <authorList>
            <person name="Piskurich J.F."/>
            <person name="Blanchard M.H."/>
            <person name="Youngman K.R."/>
            <person name="France J.A."/>
            <person name="Kaetzel C.S."/>
        </authorList>
    </citation>
    <scope>NUCLEOTIDE SEQUENCE [MRNA]</scope>
    <source>
        <strain>C57BL/6 X CBA</strain>
        <tissue>Liver</tissue>
    </source>
</reference>
<reference key="2">
    <citation type="journal article" date="1997" name="Gene">
        <title>Genomic cloning and structural analysis of the murine polymeric receptor (pIgR) gene and promoter region.</title>
        <authorList>
            <person name="Martin M.G."/>
            <person name="Gutierrez E.M."/>
            <person name="Lam J.T."/>
            <person name="Li T.W.H."/>
            <person name="Wang J."/>
        </authorList>
    </citation>
    <scope>NUCLEOTIDE SEQUENCE [GENOMIC DNA]</scope>
    <source>
        <strain>129/SvJ</strain>
    </source>
</reference>
<reference key="3">
    <citation type="journal article" date="1999" name="Transgenic Res.">
        <title>Over-expression of the murine polymeric immunoglobulin receptor gene in the mammary gland of transgenic mice.</title>
        <authorList>
            <person name="de Groot N."/>
            <person name="van Kuik-Romeijn P."/>
            <person name="Lee S.H."/>
            <person name="de Boer H.A."/>
        </authorList>
    </citation>
    <scope>NUCLEOTIDE SEQUENCE</scope>
    <source>
        <strain>129</strain>
        <tissue>Liver</tissue>
    </source>
</reference>
<reference key="4">
    <citation type="journal article" date="2007" name="Proc. Natl. Acad. Sci. U.S.A.">
        <title>Large-scale phosphorylation analysis of mouse liver.</title>
        <authorList>
            <person name="Villen J."/>
            <person name="Beausoleil S.A."/>
            <person name="Gerber S.A."/>
            <person name="Gygi S.P."/>
        </authorList>
    </citation>
    <scope>PHOSPHORYLATION [LARGE SCALE ANALYSIS] AT SER-689 AND SER-742</scope>
    <scope>IDENTIFICATION BY MASS SPECTROMETRY [LARGE SCALE ANALYSIS]</scope>
    <source>
        <tissue>Liver</tissue>
    </source>
</reference>
<reference key="5">
    <citation type="journal article" date="2010" name="Cell">
        <title>A tissue-specific atlas of mouse protein phosphorylation and expression.</title>
        <authorList>
            <person name="Huttlin E.L."/>
            <person name="Jedrychowski M.P."/>
            <person name="Elias J.E."/>
            <person name="Goswami T."/>
            <person name="Rad R."/>
            <person name="Beausoleil S.A."/>
            <person name="Villen J."/>
            <person name="Haas W."/>
            <person name="Sowa M.E."/>
            <person name="Gygi S.P."/>
        </authorList>
    </citation>
    <scope>IDENTIFICATION BY MASS SPECTROMETRY [LARGE SCALE ANALYSIS]</scope>
    <source>
        <tissue>Liver</tissue>
    </source>
</reference>
<dbReference type="EMBL" id="U06431">
    <property type="protein sequence ID" value="AAA67440.1"/>
    <property type="molecule type" value="mRNA"/>
</dbReference>
<dbReference type="EMBL" id="U83434">
    <property type="protein sequence ID" value="AAC53585.1"/>
    <property type="molecule type" value="Genomic_DNA"/>
</dbReference>
<dbReference type="EMBL" id="U83427">
    <property type="protein sequence ID" value="AAC53585.1"/>
    <property type="status" value="JOINED"/>
    <property type="molecule type" value="Genomic_DNA"/>
</dbReference>
<dbReference type="EMBL" id="U83428">
    <property type="protein sequence ID" value="AAC53585.1"/>
    <property type="status" value="JOINED"/>
    <property type="molecule type" value="Genomic_DNA"/>
</dbReference>
<dbReference type="EMBL" id="U83429">
    <property type="protein sequence ID" value="AAC53585.1"/>
    <property type="status" value="JOINED"/>
    <property type="molecule type" value="Genomic_DNA"/>
</dbReference>
<dbReference type="EMBL" id="U83430">
    <property type="protein sequence ID" value="AAC53585.1"/>
    <property type="status" value="JOINED"/>
    <property type="molecule type" value="Genomic_DNA"/>
</dbReference>
<dbReference type="EMBL" id="U83431">
    <property type="protein sequence ID" value="AAC53585.1"/>
    <property type="status" value="JOINED"/>
    <property type="molecule type" value="Genomic_DNA"/>
</dbReference>
<dbReference type="EMBL" id="U83432">
    <property type="protein sequence ID" value="AAC53585.1"/>
    <property type="status" value="JOINED"/>
    <property type="molecule type" value="Genomic_DNA"/>
</dbReference>
<dbReference type="EMBL" id="U83433">
    <property type="protein sequence ID" value="AAC53585.1"/>
    <property type="status" value="JOINED"/>
    <property type="molecule type" value="Genomic_DNA"/>
</dbReference>
<dbReference type="EMBL" id="Y16524">
    <property type="protein sequence ID" value="CAA76272.1"/>
    <property type="molecule type" value="Genomic_DNA"/>
</dbReference>
<dbReference type="EMBL" id="Y16525">
    <property type="protein sequence ID" value="CAA76272.1"/>
    <property type="status" value="JOINED"/>
    <property type="molecule type" value="Genomic_DNA"/>
</dbReference>
<dbReference type="EMBL" id="Y16526">
    <property type="protein sequence ID" value="CAA76272.1"/>
    <property type="status" value="JOINED"/>
    <property type="molecule type" value="Genomic_DNA"/>
</dbReference>
<dbReference type="EMBL" id="Y16527">
    <property type="protein sequence ID" value="CAA76272.1"/>
    <property type="status" value="JOINED"/>
    <property type="molecule type" value="Genomic_DNA"/>
</dbReference>
<dbReference type="EMBL" id="Y16528">
    <property type="protein sequence ID" value="CAA76272.1"/>
    <property type="status" value="JOINED"/>
    <property type="molecule type" value="Genomic_DNA"/>
</dbReference>
<dbReference type="EMBL" id="Y16529">
    <property type="protein sequence ID" value="CAA76272.1"/>
    <property type="status" value="JOINED"/>
    <property type="molecule type" value="Genomic_DNA"/>
</dbReference>
<dbReference type="EMBL" id="Y16530">
    <property type="protein sequence ID" value="CAA76272.1"/>
    <property type="status" value="JOINED"/>
    <property type="molecule type" value="Genomic_DNA"/>
</dbReference>
<dbReference type="EMBL" id="Y16531">
    <property type="protein sequence ID" value="CAA76272.1"/>
    <property type="status" value="JOINED"/>
    <property type="molecule type" value="Genomic_DNA"/>
</dbReference>
<dbReference type="EMBL" id="Y16532">
    <property type="protein sequence ID" value="CAA76272.1"/>
    <property type="status" value="JOINED"/>
    <property type="molecule type" value="Genomic_DNA"/>
</dbReference>
<dbReference type="CCDS" id="CCDS15260.1"/>
<dbReference type="RefSeq" id="NP_035212.2">
    <property type="nucleotide sequence ID" value="NM_011082.3"/>
</dbReference>
<dbReference type="PDB" id="4NOB">
    <property type="method" value="X-ray"/>
    <property type="resolution" value="1.51 A"/>
    <property type="chains" value="A=20-133"/>
</dbReference>
<dbReference type="PDB" id="4NOF">
    <property type="method" value="X-ray"/>
    <property type="resolution" value="1.65 A"/>
    <property type="chains" value="A/B=133-245"/>
</dbReference>
<dbReference type="PDB" id="7JG2">
    <property type="method" value="EM"/>
    <property type="resolution" value="3.30 A"/>
    <property type="chains" value="E=19-567"/>
</dbReference>
<dbReference type="PDBsum" id="4NOB"/>
<dbReference type="PDBsum" id="4NOF"/>
<dbReference type="PDBsum" id="7JG2"/>
<dbReference type="EMDB" id="EMD-22310"/>
<dbReference type="SMR" id="O70570"/>
<dbReference type="BioGRID" id="202157">
    <property type="interactions" value="2"/>
</dbReference>
<dbReference type="FunCoup" id="O70570">
    <property type="interactions" value="134"/>
</dbReference>
<dbReference type="STRING" id="10090.ENSMUSP00000027675"/>
<dbReference type="GlyCosmos" id="O70570">
    <property type="glycosylation" value="6 sites, No reported glycans"/>
</dbReference>
<dbReference type="GlyGen" id="O70570">
    <property type="glycosylation" value="7 sites, 1 N-linked glycan (1 site)"/>
</dbReference>
<dbReference type="iPTMnet" id="O70570"/>
<dbReference type="PhosphoSitePlus" id="O70570"/>
<dbReference type="SwissPalm" id="O70570"/>
<dbReference type="CPTAC" id="non-CPTAC-3738"/>
<dbReference type="jPOST" id="O70570"/>
<dbReference type="PaxDb" id="10090-ENSMUSP00000027675"/>
<dbReference type="PeptideAtlas" id="O70570"/>
<dbReference type="ProteomicsDB" id="288210"/>
<dbReference type="ABCD" id="O70570">
    <property type="antibodies" value="4 sequenced antibodies"/>
</dbReference>
<dbReference type="Antibodypedia" id="1594">
    <property type="antibodies" value="540 antibodies from 35 providers"/>
</dbReference>
<dbReference type="DNASU" id="18703"/>
<dbReference type="Ensembl" id="ENSMUST00000027675.14">
    <property type="protein sequence ID" value="ENSMUSP00000027675.8"/>
    <property type="gene ID" value="ENSMUSG00000026417.14"/>
</dbReference>
<dbReference type="GeneID" id="18703"/>
<dbReference type="KEGG" id="mmu:18703"/>
<dbReference type="UCSC" id="uc011wrk.1">
    <property type="organism name" value="mouse"/>
</dbReference>
<dbReference type="AGR" id="MGI:103080"/>
<dbReference type="CTD" id="5284"/>
<dbReference type="MGI" id="MGI:103080">
    <property type="gene designation" value="Pigr"/>
</dbReference>
<dbReference type="VEuPathDB" id="HostDB:ENSMUSG00000026417"/>
<dbReference type="eggNOG" id="ENOG502QPKT">
    <property type="taxonomic scope" value="Eukaryota"/>
</dbReference>
<dbReference type="GeneTree" id="ENSGT00940000161667"/>
<dbReference type="HOGENOM" id="CLU_020923_0_0_1"/>
<dbReference type="InParanoid" id="O70570"/>
<dbReference type="OMA" id="IKCYYPA"/>
<dbReference type="OrthoDB" id="6157407at2759"/>
<dbReference type="PhylomeDB" id="O70570"/>
<dbReference type="TreeFam" id="TF334441"/>
<dbReference type="Reactome" id="R-MMU-6798695">
    <property type="pathway name" value="Neutrophil degranulation"/>
</dbReference>
<dbReference type="BioGRID-ORCS" id="18703">
    <property type="hits" value="3 hits in 78 CRISPR screens"/>
</dbReference>
<dbReference type="ChiTaRS" id="Pigr">
    <property type="organism name" value="mouse"/>
</dbReference>
<dbReference type="EvolutionaryTrace" id="O70570"/>
<dbReference type="PRO" id="PR:O70570"/>
<dbReference type="Proteomes" id="UP000000589">
    <property type="component" value="Chromosome 1"/>
</dbReference>
<dbReference type="RNAct" id="O70570">
    <property type="molecule type" value="protein"/>
</dbReference>
<dbReference type="Bgee" id="ENSMUSG00000026417">
    <property type="expression patterns" value="Expressed in ileal epithelium and 84 other cell types or tissues"/>
</dbReference>
<dbReference type="ExpressionAtlas" id="O70570">
    <property type="expression patterns" value="baseline and differential"/>
</dbReference>
<dbReference type="GO" id="GO:0005886">
    <property type="term" value="C:plasma membrane"/>
    <property type="evidence" value="ECO:0000250"/>
    <property type="project" value="UniProtKB"/>
</dbReference>
<dbReference type="GO" id="GO:0043235">
    <property type="term" value="C:receptor complex"/>
    <property type="evidence" value="ECO:0000266"/>
    <property type="project" value="MGI"/>
</dbReference>
<dbReference type="GO" id="GO:0071751">
    <property type="term" value="C:secretory IgA immunoglobulin complex"/>
    <property type="evidence" value="ECO:0000250"/>
    <property type="project" value="UniProtKB"/>
</dbReference>
<dbReference type="GO" id="GO:0001790">
    <property type="term" value="F:polymeric immunoglobulin binding"/>
    <property type="evidence" value="ECO:0007669"/>
    <property type="project" value="Ensembl"/>
</dbReference>
<dbReference type="GO" id="GO:0001792">
    <property type="term" value="F:polymeric immunoglobulin receptor activity"/>
    <property type="evidence" value="ECO:0007669"/>
    <property type="project" value="Ensembl"/>
</dbReference>
<dbReference type="GO" id="GO:0001580">
    <property type="term" value="P:detection of chemical stimulus involved in sensory perception of bitter taste"/>
    <property type="evidence" value="ECO:0007669"/>
    <property type="project" value="Ensembl"/>
</dbReference>
<dbReference type="GO" id="GO:0007173">
    <property type="term" value="P:epidermal growth factor receptor signaling pathway"/>
    <property type="evidence" value="ECO:0007669"/>
    <property type="project" value="Ensembl"/>
</dbReference>
<dbReference type="GO" id="GO:0002415">
    <property type="term" value="P:immunoglobulin transcytosis in epithelial cells mediated by polymeric immunoglobulin receptor"/>
    <property type="evidence" value="ECO:0000250"/>
    <property type="project" value="UniProtKB"/>
</dbReference>
<dbReference type="GO" id="GO:0043113">
    <property type="term" value="P:receptor clustering"/>
    <property type="evidence" value="ECO:0007669"/>
    <property type="project" value="Ensembl"/>
</dbReference>
<dbReference type="CDD" id="cd05716">
    <property type="entry name" value="IgV_pIgR_like"/>
    <property type="match status" value="4"/>
</dbReference>
<dbReference type="FunFam" id="2.60.40.10:FF:001340">
    <property type="entry name" value="Polymeric immunoglobulin receptor"/>
    <property type="match status" value="3"/>
</dbReference>
<dbReference type="FunFam" id="2.60.40.10:FF:002327">
    <property type="entry name" value="Polymeric immunoglobulin receptor"/>
    <property type="match status" value="1"/>
</dbReference>
<dbReference type="Gene3D" id="2.60.40.10">
    <property type="entry name" value="Immunoglobulins"/>
    <property type="match status" value="5"/>
</dbReference>
<dbReference type="InterPro" id="IPR050671">
    <property type="entry name" value="CD300_family_receptors"/>
</dbReference>
<dbReference type="InterPro" id="IPR007110">
    <property type="entry name" value="Ig-like_dom"/>
</dbReference>
<dbReference type="InterPro" id="IPR036179">
    <property type="entry name" value="Ig-like_dom_sf"/>
</dbReference>
<dbReference type="InterPro" id="IPR013783">
    <property type="entry name" value="Ig-like_fold"/>
</dbReference>
<dbReference type="InterPro" id="IPR003599">
    <property type="entry name" value="Ig_sub"/>
</dbReference>
<dbReference type="InterPro" id="IPR013106">
    <property type="entry name" value="Ig_V-set"/>
</dbReference>
<dbReference type="PANTHER" id="PTHR11860:SF82">
    <property type="entry name" value="POLYMERIC IMMUNOGLOBULIN RECEPTOR"/>
    <property type="match status" value="1"/>
</dbReference>
<dbReference type="PANTHER" id="PTHR11860">
    <property type="entry name" value="POLYMERIC-IMMUNOGLOBULIN RECEPTOR"/>
    <property type="match status" value="1"/>
</dbReference>
<dbReference type="Pfam" id="PF07686">
    <property type="entry name" value="V-set"/>
    <property type="match status" value="5"/>
</dbReference>
<dbReference type="SMART" id="SM00409">
    <property type="entry name" value="IG"/>
    <property type="match status" value="5"/>
</dbReference>
<dbReference type="SMART" id="SM00406">
    <property type="entry name" value="IGv"/>
    <property type="match status" value="4"/>
</dbReference>
<dbReference type="SUPFAM" id="SSF48726">
    <property type="entry name" value="Immunoglobulin"/>
    <property type="match status" value="5"/>
</dbReference>
<dbReference type="PROSITE" id="PS50835">
    <property type="entry name" value="IG_LIKE"/>
    <property type="match status" value="3"/>
</dbReference>
<name>PIGR_MOUSE</name>